<comment type="function">
    <text evidence="1">RNaseP catalyzes the removal of the 5'-leader sequence from pre-tRNA to produce the mature 5'-terminus. It can also cleave other RNA substrates such as 4.5S RNA. The protein component plays an auxiliary but essential role in vivo by binding to the 5'-leader sequence and broadening the substrate specificity of the ribozyme.</text>
</comment>
<comment type="catalytic activity">
    <reaction evidence="1">
        <text>Endonucleolytic cleavage of RNA, removing 5'-extranucleotides from tRNA precursor.</text>
        <dbReference type="EC" id="3.1.26.5"/>
    </reaction>
</comment>
<comment type="subunit">
    <text evidence="1">Consists of a catalytic RNA component (M1 or rnpB) and a protein subunit.</text>
</comment>
<comment type="similarity">
    <text evidence="1">Belongs to the RnpA family.</text>
</comment>
<organism>
    <name type="scientific">Erythrobacter litoralis (strain HTCC2594)</name>
    <dbReference type="NCBI Taxonomy" id="314225"/>
    <lineage>
        <taxon>Bacteria</taxon>
        <taxon>Pseudomonadati</taxon>
        <taxon>Pseudomonadota</taxon>
        <taxon>Alphaproteobacteria</taxon>
        <taxon>Sphingomonadales</taxon>
        <taxon>Erythrobacteraceae</taxon>
        <taxon>Erythrobacter/Porphyrobacter group</taxon>
        <taxon>Erythrobacter</taxon>
    </lineage>
</organism>
<feature type="chain" id="PRO_1000021408" description="Ribonuclease P protein component">
    <location>
        <begin position="1"/>
        <end position="121"/>
    </location>
</feature>
<sequence>MTDKPAVIRKRADFLAANRGLRVARPGFVLLAHPNQGQGQRYGITVTKKIGNAVVRNRMKRRFRELLWELLPQQGLADHDHILIGREGGIERDFGKLREELMLALRRAREGKGDPRRRRRR</sequence>
<name>RNPA_ERYLH</name>
<reference key="1">
    <citation type="journal article" date="2009" name="J. Bacteriol.">
        <title>Complete genome sequence of Erythrobacter litoralis HTCC2594.</title>
        <authorList>
            <person name="Oh H.M."/>
            <person name="Giovannoni S.J."/>
            <person name="Ferriera S."/>
            <person name="Johnson J."/>
            <person name="Cho J.C."/>
        </authorList>
    </citation>
    <scope>NUCLEOTIDE SEQUENCE [LARGE SCALE GENOMIC DNA]</scope>
    <source>
        <strain>HTCC2594</strain>
    </source>
</reference>
<protein>
    <recommendedName>
        <fullName evidence="1">Ribonuclease P protein component</fullName>
        <shortName evidence="1">RNase P protein</shortName>
        <shortName evidence="1">RNaseP protein</shortName>
        <ecNumber evidence="1">3.1.26.5</ecNumber>
    </recommendedName>
    <alternativeName>
        <fullName evidence="1">Protein C5</fullName>
    </alternativeName>
</protein>
<gene>
    <name evidence="1" type="primary">rnpA</name>
    <name type="ordered locus">ELI_10645</name>
</gene>
<evidence type="ECO:0000255" key="1">
    <source>
        <dbReference type="HAMAP-Rule" id="MF_00227"/>
    </source>
</evidence>
<dbReference type="EC" id="3.1.26.5" evidence="1"/>
<dbReference type="EMBL" id="CP000157">
    <property type="protein sequence ID" value="ABC64221.1"/>
    <property type="molecule type" value="Genomic_DNA"/>
</dbReference>
<dbReference type="RefSeq" id="WP_011415048.1">
    <property type="nucleotide sequence ID" value="NC_007722.1"/>
</dbReference>
<dbReference type="SMR" id="Q2N7X0"/>
<dbReference type="STRING" id="314225.ELI_10645"/>
<dbReference type="KEGG" id="eli:ELI_10645"/>
<dbReference type="eggNOG" id="COG0594">
    <property type="taxonomic scope" value="Bacteria"/>
</dbReference>
<dbReference type="HOGENOM" id="CLU_117179_6_0_5"/>
<dbReference type="OrthoDB" id="9810867at2"/>
<dbReference type="Proteomes" id="UP000008808">
    <property type="component" value="Chromosome"/>
</dbReference>
<dbReference type="GO" id="GO:0030677">
    <property type="term" value="C:ribonuclease P complex"/>
    <property type="evidence" value="ECO:0007669"/>
    <property type="project" value="TreeGrafter"/>
</dbReference>
<dbReference type="GO" id="GO:0042781">
    <property type="term" value="F:3'-tRNA processing endoribonuclease activity"/>
    <property type="evidence" value="ECO:0007669"/>
    <property type="project" value="TreeGrafter"/>
</dbReference>
<dbReference type="GO" id="GO:0004526">
    <property type="term" value="F:ribonuclease P activity"/>
    <property type="evidence" value="ECO:0007669"/>
    <property type="project" value="UniProtKB-UniRule"/>
</dbReference>
<dbReference type="GO" id="GO:0000049">
    <property type="term" value="F:tRNA binding"/>
    <property type="evidence" value="ECO:0007669"/>
    <property type="project" value="UniProtKB-UniRule"/>
</dbReference>
<dbReference type="GO" id="GO:0001682">
    <property type="term" value="P:tRNA 5'-leader removal"/>
    <property type="evidence" value="ECO:0007669"/>
    <property type="project" value="UniProtKB-UniRule"/>
</dbReference>
<dbReference type="Gene3D" id="3.30.230.10">
    <property type="match status" value="1"/>
</dbReference>
<dbReference type="HAMAP" id="MF_00227">
    <property type="entry name" value="RNase_P"/>
    <property type="match status" value="1"/>
</dbReference>
<dbReference type="InterPro" id="IPR020568">
    <property type="entry name" value="Ribosomal_Su5_D2-typ_SF"/>
</dbReference>
<dbReference type="InterPro" id="IPR014721">
    <property type="entry name" value="Ribsml_uS5_D2-typ_fold_subgr"/>
</dbReference>
<dbReference type="InterPro" id="IPR000100">
    <property type="entry name" value="RNase_P"/>
</dbReference>
<dbReference type="NCBIfam" id="TIGR00188">
    <property type="entry name" value="rnpA"/>
    <property type="match status" value="1"/>
</dbReference>
<dbReference type="PANTHER" id="PTHR33992">
    <property type="entry name" value="RIBONUCLEASE P PROTEIN COMPONENT"/>
    <property type="match status" value="1"/>
</dbReference>
<dbReference type="PANTHER" id="PTHR33992:SF1">
    <property type="entry name" value="RIBONUCLEASE P PROTEIN COMPONENT"/>
    <property type="match status" value="1"/>
</dbReference>
<dbReference type="Pfam" id="PF00825">
    <property type="entry name" value="Ribonuclease_P"/>
    <property type="match status" value="1"/>
</dbReference>
<dbReference type="SUPFAM" id="SSF54211">
    <property type="entry name" value="Ribosomal protein S5 domain 2-like"/>
    <property type="match status" value="1"/>
</dbReference>
<keyword id="KW-0255">Endonuclease</keyword>
<keyword id="KW-0378">Hydrolase</keyword>
<keyword id="KW-0540">Nuclease</keyword>
<keyword id="KW-1185">Reference proteome</keyword>
<keyword id="KW-0694">RNA-binding</keyword>
<keyword id="KW-0819">tRNA processing</keyword>
<accession>Q2N7X0</accession>
<proteinExistence type="inferred from homology"/>